<sequence length="449" mass="50204">MAALAVLRYAGSSPLLWGWGPILFGLLGSVFVLLLPLVGIEEQCCATLKGLALLRCQMWGGIQRPVVHTTSLAVPFTALDLLPQKVKPSKETQLEAKAALQQALEMKKSGKREKAHKLLVHALNMNPEFVEALTELGTILEEEKDVVQADHLYTKALAISPCHEKALVSRDRTLPLVEEIDQRHFGIIDGKVRRLMSIPKGNSALRRVMEETYYHHIYHTVAIEGNTLTLSEIRHIIETRYAVPGKSLQEQNEAIGVDVAMKYINTTLLSRDGAITVNDILEIHRRVLGYADPVEAGRFRVNQVFVGHHIPPHPQDLDKHMQELVQWLNSEETLHLHPVEFAALAHYKLVYVHPFVDGNGRTSRLLMNLILMQASYPPITIRKEQRAEYYAALDTANEGDVRPFIRFIAKCTEMTLDTLLIATTEHAVGLPGASNHACPDCKQTIPVHS</sequence>
<feature type="chain" id="PRO_0000317304" description="Protein adenylyltransferase FICD">
    <location>
        <begin position="1"/>
        <end position="449"/>
    </location>
</feature>
<feature type="transmembrane region" description="Helical" evidence="2">
    <location>
        <begin position="15"/>
        <end position="35"/>
    </location>
</feature>
<feature type="repeat" description="TPR 1">
    <location>
        <begin position="96"/>
        <end position="129"/>
    </location>
</feature>
<feature type="repeat" description="TPR 2">
    <location>
        <begin position="130"/>
        <end position="163"/>
    </location>
</feature>
<feature type="domain" description="Fido" evidence="3">
    <location>
        <begin position="275"/>
        <end position="410"/>
    </location>
</feature>
<feature type="short sequence motif" description="Inhibitory (S/T)XXXE(G/N) motif">
    <location>
        <begin position="220"/>
        <end position="225"/>
    </location>
</feature>
<feature type="binding site" evidence="1">
    <location>
        <position position="224"/>
    </location>
    <ligand>
        <name>ATP</name>
        <dbReference type="ChEBI" id="CHEBI:30616"/>
    </ligand>
</feature>
<feature type="binding site" evidence="1">
    <location>
        <begin position="250"/>
        <end position="251"/>
    </location>
    <ligand>
        <name>ATP</name>
        <dbReference type="ChEBI" id="CHEBI:30616"/>
    </ligand>
</feature>
<feature type="binding site" evidence="1">
    <location>
        <begin position="358"/>
        <end position="360"/>
    </location>
    <ligand>
        <name>ATP</name>
        <dbReference type="ChEBI" id="CHEBI:30616"/>
    </ligand>
</feature>
<feature type="binding site" evidence="1">
    <location>
        <position position="364"/>
    </location>
    <ligand>
        <name>ATP</name>
        <dbReference type="ChEBI" id="CHEBI:30616"/>
    </ligand>
</feature>
<gene>
    <name type="primary">ficd</name>
    <name type="ORF">si:ch211-191d15.5</name>
    <name type="ORF">zgc:110336</name>
</gene>
<evidence type="ECO:0000250" key="1"/>
<evidence type="ECO:0000255" key="2"/>
<evidence type="ECO:0000255" key="3">
    <source>
        <dbReference type="PROSITE-ProRule" id="PRU00791"/>
    </source>
</evidence>
<evidence type="ECO:0000305" key="4"/>
<proteinExistence type="evidence at transcript level"/>
<name>FICD_DANRE</name>
<dbReference type="EC" id="2.7.7.108"/>
<dbReference type="EMBL" id="AL845326">
    <property type="protein sequence ID" value="CAE50173.1"/>
    <property type="molecule type" value="Genomic_DNA"/>
</dbReference>
<dbReference type="EMBL" id="BC092885">
    <property type="protein sequence ID" value="AAH92885.1"/>
    <property type="molecule type" value="mRNA"/>
</dbReference>
<dbReference type="RefSeq" id="NP_001017794.1">
    <property type="nucleotide sequence ID" value="NM_001017794.2"/>
</dbReference>
<dbReference type="RefSeq" id="XP_005165169.1">
    <property type="nucleotide sequence ID" value="XM_005165112.5"/>
</dbReference>
<dbReference type="SMR" id="Q6ZM51"/>
<dbReference type="FunCoup" id="Q6ZM51">
    <property type="interactions" value="833"/>
</dbReference>
<dbReference type="STRING" id="7955.ENSDARP00000123219"/>
<dbReference type="PaxDb" id="7955-ENSDARP00000123219"/>
<dbReference type="Ensembl" id="ENSDART00000144232">
    <property type="protein sequence ID" value="ENSDARP00000123219"/>
    <property type="gene ID" value="ENSDARG00000035595"/>
</dbReference>
<dbReference type="Ensembl" id="ENSDART00000183051">
    <property type="protein sequence ID" value="ENSDARP00000145045"/>
    <property type="gene ID" value="ENSDARG00000035595"/>
</dbReference>
<dbReference type="GeneID" id="334648"/>
<dbReference type="KEGG" id="dre:334648"/>
<dbReference type="AGR" id="ZFIN:ZDB-GENE-030131-6588"/>
<dbReference type="CTD" id="11153"/>
<dbReference type="ZFIN" id="ZDB-GENE-030131-6588">
    <property type="gene designation" value="ficd"/>
</dbReference>
<dbReference type="eggNOG" id="KOG3824">
    <property type="taxonomic scope" value="Eukaryota"/>
</dbReference>
<dbReference type="HOGENOM" id="CLU_040460_0_0_1"/>
<dbReference type="InParanoid" id="Q6ZM51"/>
<dbReference type="OMA" id="QLRCQLW"/>
<dbReference type="OrthoDB" id="439046at2759"/>
<dbReference type="PhylomeDB" id="Q6ZM51"/>
<dbReference type="TreeFam" id="TF314692"/>
<dbReference type="PRO" id="PR:Q6ZM51"/>
<dbReference type="Proteomes" id="UP000000437">
    <property type="component" value="Chromosome 5"/>
</dbReference>
<dbReference type="Bgee" id="ENSDARG00000035595">
    <property type="expression patterns" value="Expressed in ovary and 27 other cell types or tissues"/>
</dbReference>
<dbReference type="GO" id="GO:0016020">
    <property type="term" value="C:membrane"/>
    <property type="evidence" value="ECO:0007669"/>
    <property type="project" value="UniProtKB-SubCell"/>
</dbReference>
<dbReference type="GO" id="GO:0070733">
    <property type="term" value="F:AMPylase activity"/>
    <property type="evidence" value="ECO:0000250"/>
    <property type="project" value="UniProtKB"/>
</dbReference>
<dbReference type="GO" id="GO:0005524">
    <property type="term" value="F:ATP binding"/>
    <property type="evidence" value="ECO:0007669"/>
    <property type="project" value="UniProtKB-KW"/>
</dbReference>
<dbReference type="GO" id="GO:0018117">
    <property type="term" value="P:protein adenylylation"/>
    <property type="evidence" value="ECO:0000250"/>
    <property type="project" value="UniProtKB"/>
</dbReference>
<dbReference type="FunFam" id="1.10.3290.10:FF:000001">
    <property type="entry name" value="adenosine monophosphate-protein transferase FICD"/>
    <property type="match status" value="1"/>
</dbReference>
<dbReference type="Gene3D" id="1.10.3290.10">
    <property type="entry name" value="Fido-like domain"/>
    <property type="match status" value="1"/>
</dbReference>
<dbReference type="Gene3D" id="1.25.40.10">
    <property type="entry name" value="Tetratricopeptide repeat domain"/>
    <property type="match status" value="1"/>
</dbReference>
<dbReference type="InterPro" id="IPR003812">
    <property type="entry name" value="Fido"/>
</dbReference>
<dbReference type="InterPro" id="IPR036597">
    <property type="entry name" value="Fido-like_dom_sf"/>
</dbReference>
<dbReference type="InterPro" id="IPR040198">
    <property type="entry name" value="Fido_containing"/>
</dbReference>
<dbReference type="InterPro" id="IPR011990">
    <property type="entry name" value="TPR-like_helical_dom_sf"/>
</dbReference>
<dbReference type="InterPro" id="IPR019734">
    <property type="entry name" value="TPR_rpt"/>
</dbReference>
<dbReference type="PANTHER" id="PTHR13504">
    <property type="entry name" value="FIDO DOMAIN-CONTAINING PROTEIN DDB_G0283145"/>
    <property type="match status" value="1"/>
</dbReference>
<dbReference type="PANTHER" id="PTHR13504:SF34">
    <property type="entry name" value="PROTEIN ADENYLYLTRANSFERASE FICD"/>
    <property type="match status" value="1"/>
</dbReference>
<dbReference type="Pfam" id="PF02661">
    <property type="entry name" value="Fic"/>
    <property type="match status" value="1"/>
</dbReference>
<dbReference type="SUPFAM" id="SSF140931">
    <property type="entry name" value="Fic-like"/>
    <property type="match status" value="1"/>
</dbReference>
<dbReference type="SUPFAM" id="SSF48452">
    <property type="entry name" value="TPR-like"/>
    <property type="match status" value="1"/>
</dbReference>
<dbReference type="PROSITE" id="PS51459">
    <property type="entry name" value="FIDO"/>
    <property type="match status" value="1"/>
</dbReference>
<dbReference type="PROSITE" id="PS50005">
    <property type="entry name" value="TPR"/>
    <property type="match status" value="2"/>
</dbReference>
<dbReference type="PROSITE" id="PS50293">
    <property type="entry name" value="TPR_REGION"/>
    <property type="match status" value="1"/>
</dbReference>
<organism>
    <name type="scientific">Danio rerio</name>
    <name type="common">Zebrafish</name>
    <name type="synonym">Brachydanio rerio</name>
    <dbReference type="NCBI Taxonomy" id="7955"/>
    <lineage>
        <taxon>Eukaryota</taxon>
        <taxon>Metazoa</taxon>
        <taxon>Chordata</taxon>
        <taxon>Craniata</taxon>
        <taxon>Vertebrata</taxon>
        <taxon>Euteleostomi</taxon>
        <taxon>Actinopterygii</taxon>
        <taxon>Neopterygii</taxon>
        <taxon>Teleostei</taxon>
        <taxon>Ostariophysi</taxon>
        <taxon>Cypriniformes</taxon>
        <taxon>Danionidae</taxon>
        <taxon>Danioninae</taxon>
        <taxon>Danio</taxon>
    </lineage>
</organism>
<comment type="function">
    <text evidence="1">Adenylyltransferase that mediates the addition of adenosine 5'-monophosphate (AMP) to specific residues of target proteins.</text>
</comment>
<comment type="catalytic activity">
    <reaction>
        <text>L-tyrosyl-[protein] + ATP = O-(5'-adenylyl)-L-tyrosyl-[protein] + diphosphate</text>
        <dbReference type="Rhea" id="RHEA:54288"/>
        <dbReference type="Rhea" id="RHEA-COMP:10136"/>
        <dbReference type="Rhea" id="RHEA-COMP:13846"/>
        <dbReference type="ChEBI" id="CHEBI:30616"/>
        <dbReference type="ChEBI" id="CHEBI:33019"/>
        <dbReference type="ChEBI" id="CHEBI:46858"/>
        <dbReference type="ChEBI" id="CHEBI:83624"/>
        <dbReference type="EC" id="2.7.7.108"/>
    </reaction>
</comment>
<comment type="catalytic activity">
    <reaction>
        <text>L-threonyl-[protein] + ATP = 3-O-(5'-adenylyl)-L-threonyl-[protein] + diphosphate</text>
        <dbReference type="Rhea" id="RHEA:54292"/>
        <dbReference type="Rhea" id="RHEA-COMP:11060"/>
        <dbReference type="Rhea" id="RHEA-COMP:13847"/>
        <dbReference type="ChEBI" id="CHEBI:30013"/>
        <dbReference type="ChEBI" id="CHEBI:30616"/>
        <dbReference type="ChEBI" id="CHEBI:33019"/>
        <dbReference type="ChEBI" id="CHEBI:138113"/>
        <dbReference type="EC" id="2.7.7.108"/>
    </reaction>
</comment>
<comment type="activity regulation">
    <text evidence="1">Adenylyltransferase activity is inhibited by the inhibitory helix present at the N-terminus: Glu-224 binds ATP and competes with ATP-binding at Arg-364, thereby preventing adenylyltransferase activity. Activation dissociates ATP-binding from Glu-224, allowing ordered binding of the entire ATP moiety with the alpha-phosphate in an orientation that is productive for accepting an incoming target hydroxyl side chain (By similarity).</text>
</comment>
<comment type="subcellular location">
    <subcellularLocation>
        <location evidence="4">Membrane</location>
        <topology evidence="4">Single-pass membrane protein</topology>
    </subcellularLocation>
</comment>
<comment type="domain">
    <text evidence="1">The fido domain mediates the adenylyltransferase activity.</text>
</comment>
<comment type="similarity">
    <text evidence="4">Belongs to the fic family.</text>
</comment>
<reference key="1">
    <citation type="journal article" date="2013" name="Nature">
        <title>The zebrafish reference genome sequence and its relationship to the human genome.</title>
        <authorList>
            <person name="Howe K."/>
            <person name="Clark M.D."/>
            <person name="Torroja C.F."/>
            <person name="Torrance J."/>
            <person name="Berthelot C."/>
            <person name="Muffato M."/>
            <person name="Collins J.E."/>
            <person name="Humphray S."/>
            <person name="McLaren K."/>
            <person name="Matthews L."/>
            <person name="McLaren S."/>
            <person name="Sealy I."/>
            <person name="Caccamo M."/>
            <person name="Churcher C."/>
            <person name="Scott C."/>
            <person name="Barrett J.C."/>
            <person name="Koch R."/>
            <person name="Rauch G.J."/>
            <person name="White S."/>
            <person name="Chow W."/>
            <person name="Kilian B."/>
            <person name="Quintais L.T."/>
            <person name="Guerra-Assuncao J.A."/>
            <person name="Zhou Y."/>
            <person name="Gu Y."/>
            <person name="Yen J."/>
            <person name="Vogel J.H."/>
            <person name="Eyre T."/>
            <person name="Redmond S."/>
            <person name="Banerjee R."/>
            <person name="Chi J."/>
            <person name="Fu B."/>
            <person name="Langley E."/>
            <person name="Maguire S.F."/>
            <person name="Laird G.K."/>
            <person name="Lloyd D."/>
            <person name="Kenyon E."/>
            <person name="Donaldson S."/>
            <person name="Sehra H."/>
            <person name="Almeida-King J."/>
            <person name="Loveland J."/>
            <person name="Trevanion S."/>
            <person name="Jones M."/>
            <person name="Quail M."/>
            <person name="Willey D."/>
            <person name="Hunt A."/>
            <person name="Burton J."/>
            <person name="Sims S."/>
            <person name="McLay K."/>
            <person name="Plumb B."/>
            <person name="Davis J."/>
            <person name="Clee C."/>
            <person name="Oliver K."/>
            <person name="Clark R."/>
            <person name="Riddle C."/>
            <person name="Elliot D."/>
            <person name="Threadgold G."/>
            <person name="Harden G."/>
            <person name="Ware D."/>
            <person name="Begum S."/>
            <person name="Mortimore B."/>
            <person name="Kerry G."/>
            <person name="Heath P."/>
            <person name="Phillimore B."/>
            <person name="Tracey A."/>
            <person name="Corby N."/>
            <person name="Dunn M."/>
            <person name="Johnson C."/>
            <person name="Wood J."/>
            <person name="Clark S."/>
            <person name="Pelan S."/>
            <person name="Griffiths G."/>
            <person name="Smith M."/>
            <person name="Glithero R."/>
            <person name="Howden P."/>
            <person name="Barker N."/>
            <person name="Lloyd C."/>
            <person name="Stevens C."/>
            <person name="Harley J."/>
            <person name="Holt K."/>
            <person name="Panagiotidis G."/>
            <person name="Lovell J."/>
            <person name="Beasley H."/>
            <person name="Henderson C."/>
            <person name="Gordon D."/>
            <person name="Auger K."/>
            <person name="Wright D."/>
            <person name="Collins J."/>
            <person name="Raisen C."/>
            <person name="Dyer L."/>
            <person name="Leung K."/>
            <person name="Robertson L."/>
            <person name="Ambridge K."/>
            <person name="Leongamornlert D."/>
            <person name="McGuire S."/>
            <person name="Gilderthorp R."/>
            <person name="Griffiths C."/>
            <person name="Manthravadi D."/>
            <person name="Nichol S."/>
            <person name="Barker G."/>
            <person name="Whitehead S."/>
            <person name="Kay M."/>
            <person name="Brown J."/>
            <person name="Murnane C."/>
            <person name="Gray E."/>
            <person name="Humphries M."/>
            <person name="Sycamore N."/>
            <person name="Barker D."/>
            <person name="Saunders D."/>
            <person name="Wallis J."/>
            <person name="Babbage A."/>
            <person name="Hammond S."/>
            <person name="Mashreghi-Mohammadi M."/>
            <person name="Barr L."/>
            <person name="Martin S."/>
            <person name="Wray P."/>
            <person name="Ellington A."/>
            <person name="Matthews N."/>
            <person name="Ellwood M."/>
            <person name="Woodmansey R."/>
            <person name="Clark G."/>
            <person name="Cooper J."/>
            <person name="Tromans A."/>
            <person name="Grafham D."/>
            <person name="Skuce C."/>
            <person name="Pandian R."/>
            <person name="Andrews R."/>
            <person name="Harrison E."/>
            <person name="Kimberley A."/>
            <person name="Garnett J."/>
            <person name="Fosker N."/>
            <person name="Hall R."/>
            <person name="Garner P."/>
            <person name="Kelly D."/>
            <person name="Bird C."/>
            <person name="Palmer S."/>
            <person name="Gehring I."/>
            <person name="Berger A."/>
            <person name="Dooley C.M."/>
            <person name="Ersan-Urun Z."/>
            <person name="Eser C."/>
            <person name="Geiger H."/>
            <person name="Geisler M."/>
            <person name="Karotki L."/>
            <person name="Kirn A."/>
            <person name="Konantz J."/>
            <person name="Konantz M."/>
            <person name="Oberlander M."/>
            <person name="Rudolph-Geiger S."/>
            <person name="Teucke M."/>
            <person name="Lanz C."/>
            <person name="Raddatz G."/>
            <person name="Osoegawa K."/>
            <person name="Zhu B."/>
            <person name="Rapp A."/>
            <person name="Widaa S."/>
            <person name="Langford C."/>
            <person name="Yang F."/>
            <person name="Schuster S.C."/>
            <person name="Carter N.P."/>
            <person name="Harrow J."/>
            <person name="Ning Z."/>
            <person name="Herrero J."/>
            <person name="Searle S.M."/>
            <person name="Enright A."/>
            <person name="Geisler R."/>
            <person name="Plasterk R.H."/>
            <person name="Lee C."/>
            <person name="Westerfield M."/>
            <person name="de Jong P.J."/>
            <person name="Zon L.I."/>
            <person name="Postlethwait J.H."/>
            <person name="Nusslein-Volhard C."/>
            <person name="Hubbard T.J."/>
            <person name="Roest Crollius H."/>
            <person name="Rogers J."/>
            <person name="Stemple D.L."/>
        </authorList>
    </citation>
    <scope>NUCLEOTIDE SEQUENCE [LARGE SCALE GENOMIC DNA]</scope>
    <source>
        <strain>Tuebingen</strain>
    </source>
</reference>
<reference key="2">
    <citation type="submission" date="2005-04" db="EMBL/GenBank/DDBJ databases">
        <authorList>
            <consortium name="NIH - Zebrafish Gene Collection (ZGC) project"/>
        </authorList>
    </citation>
    <scope>NUCLEOTIDE SEQUENCE [LARGE SCALE MRNA]</scope>
    <source>
        <tissue>Olfactory epithelium</tissue>
    </source>
</reference>
<keyword id="KW-0067">ATP-binding</keyword>
<keyword id="KW-0472">Membrane</keyword>
<keyword id="KW-0547">Nucleotide-binding</keyword>
<keyword id="KW-0548">Nucleotidyltransferase</keyword>
<keyword id="KW-1185">Reference proteome</keyword>
<keyword id="KW-0677">Repeat</keyword>
<keyword id="KW-0802">TPR repeat</keyword>
<keyword id="KW-0808">Transferase</keyword>
<keyword id="KW-0812">Transmembrane</keyword>
<keyword id="KW-1133">Transmembrane helix</keyword>
<protein>
    <recommendedName>
        <fullName>Protein adenylyltransferase FICD</fullName>
        <ecNumber>2.7.7.108</ecNumber>
    </recommendedName>
    <alternativeName>
        <fullName>AMPylator FICD</fullName>
    </alternativeName>
    <alternativeName>
        <fullName>FIC domain-containing protein</fullName>
    </alternativeName>
</protein>
<accession>Q6ZM51</accession>